<comment type="function">
    <text evidence="1">Component of the archaellum.</text>
</comment>
<comment type="subcellular location">
    <subcellularLocation>
        <location evidence="1">Archaeal flagellum</location>
    </subcellularLocation>
</comment>
<comment type="similarity">
    <text evidence="2">Belongs to the FlaH family.</text>
</comment>
<feature type="chain" id="PRO_0000087279" description="Archaeal flagellar ATP-binding protein FlaH">
    <location>
        <begin position="1"/>
        <end position="230"/>
    </location>
</feature>
<feature type="binding site" evidence="1">
    <location>
        <position position="35"/>
    </location>
    <ligand>
        <name>ATP</name>
        <dbReference type="ChEBI" id="CHEBI:30616"/>
    </ligand>
</feature>
<feature type="binding site" evidence="1">
    <location>
        <position position="37"/>
    </location>
    <ligand>
        <name>ATP</name>
        <dbReference type="ChEBI" id="CHEBI:30616"/>
    </ligand>
</feature>
<feature type="binding site" evidence="1">
    <location>
        <position position="38"/>
    </location>
    <ligand>
        <name>ATP</name>
        <dbReference type="ChEBI" id="CHEBI:30616"/>
    </ligand>
</feature>
<feature type="binding site" evidence="1">
    <location>
        <position position="38"/>
    </location>
    <ligand>
        <name>Mg(2+)</name>
        <dbReference type="ChEBI" id="CHEBI:18420"/>
    </ligand>
</feature>
<feature type="binding site" evidence="1">
    <location>
        <position position="39"/>
    </location>
    <ligand>
        <name>ATP</name>
        <dbReference type="ChEBI" id="CHEBI:30616"/>
    </ligand>
</feature>
<feature type="binding site" evidence="1">
    <location>
        <position position="61"/>
    </location>
    <ligand>
        <name>ATP</name>
        <dbReference type="ChEBI" id="CHEBI:30616"/>
    </ligand>
</feature>
<feature type="binding site" evidence="1">
    <location>
        <position position="193"/>
    </location>
    <ligand>
        <name>ATP</name>
        <dbReference type="ChEBI" id="CHEBI:30616"/>
    </ligand>
</feature>
<keyword id="KW-0974">Archaeal flagellum</keyword>
<keyword id="KW-0067">ATP-binding</keyword>
<keyword id="KW-0460">Magnesium</keyword>
<keyword id="KW-0479">Metal-binding</keyword>
<keyword id="KW-0547">Nucleotide-binding</keyword>
<dbReference type="EMBL" id="U97040">
    <property type="protein sequence ID" value="AAB57832.1"/>
    <property type="molecule type" value="Genomic_DNA"/>
</dbReference>
<dbReference type="PIR" id="T44953">
    <property type="entry name" value="T44953"/>
</dbReference>
<dbReference type="SMR" id="O06641"/>
<dbReference type="GO" id="GO:0097589">
    <property type="term" value="C:archaeal-type flagellum"/>
    <property type="evidence" value="ECO:0007669"/>
    <property type="project" value="UniProtKB-SubCell"/>
</dbReference>
<dbReference type="GO" id="GO:0005524">
    <property type="term" value="F:ATP binding"/>
    <property type="evidence" value="ECO:0007669"/>
    <property type="project" value="UniProtKB-KW"/>
</dbReference>
<dbReference type="GO" id="GO:0046872">
    <property type="term" value="F:metal ion binding"/>
    <property type="evidence" value="ECO:0007669"/>
    <property type="project" value="UniProtKB-KW"/>
</dbReference>
<dbReference type="CDD" id="cd19475">
    <property type="entry name" value="FlaH"/>
    <property type="match status" value="1"/>
</dbReference>
<dbReference type="Gene3D" id="3.40.50.300">
    <property type="entry name" value="P-loop containing nucleotide triphosphate hydrolases"/>
    <property type="match status" value="1"/>
</dbReference>
<dbReference type="InterPro" id="IPR056568">
    <property type="entry name" value="ArlH"/>
</dbReference>
<dbReference type="InterPro" id="IPR014774">
    <property type="entry name" value="KaiC-like_dom"/>
</dbReference>
<dbReference type="InterPro" id="IPR027417">
    <property type="entry name" value="P-loop_NTPase"/>
</dbReference>
<dbReference type="NCBIfam" id="NF006320">
    <property type="entry name" value="PRK08533.1"/>
    <property type="match status" value="1"/>
</dbReference>
<dbReference type="PANTHER" id="PTHR43637:SF3">
    <property type="entry name" value="FLAGELLA-RELATED PROTEIN H-RELATED"/>
    <property type="match status" value="1"/>
</dbReference>
<dbReference type="PANTHER" id="PTHR43637">
    <property type="entry name" value="UPF0273 PROTEIN TM_0370"/>
    <property type="match status" value="1"/>
</dbReference>
<dbReference type="Pfam" id="PF06745">
    <property type="entry name" value="ATPase"/>
    <property type="match status" value="1"/>
</dbReference>
<dbReference type="SUPFAM" id="SSF52540">
    <property type="entry name" value="P-loop containing nucleoside triphosphate hydrolases"/>
    <property type="match status" value="1"/>
</dbReference>
<protein>
    <recommendedName>
        <fullName evidence="1">Archaeal flagellar ATP-binding protein FlaH</fullName>
    </recommendedName>
</protein>
<proteinExistence type="inferred from homology"/>
<gene>
    <name type="primary">flaH</name>
</gene>
<evidence type="ECO:0000250" key="1">
    <source>
        <dbReference type="UniProtKB" id="Q4J9K9"/>
    </source>
</evidence>
<evidence type="ECO:0000305" key="2"/>
<organism>
    <name type="scientific">Methanococcus voltae</name>
    <dbReference type="NCBI Taxonomy" id="2188"/>
    <lineage>
        <taxon>Archaea</taxon>
        <taxon>Methanobacteriati</taxon>
        <taxon>Methanobacteriota</taxon>
        <taxon>Methanomada group</taxon>
        <taxon>Methanococci</taxon>
        <taxon>Methanococcales</taxon>
        <taxon>Methanococcaceae</taxon>
        <taxon>Methanococcus</taxon>
    </lineage>
</organism>
<name>FLAH_METVO</name>
<reference key="1">
    <citation type="submission" date="1997-04" db="EMBL/GenBank/DDBJ databases">
        <authorList>
            <person name="Bayley D.P."/>
            <person name="Jarrell K.F."/>
        </authorList>
    </citation>
    <scope>NUCLEOTIDE SEQUENCE [GENOMIC DNA]</scope>
    <source>
        <strain>ATCC 33273 / DSM 1537 / NBRC 100457 / OCM 70 / PS</strain>
    </source>
</reference>
<sequence>MKYAKIELERDDVHKRFGGGIPLCSIIHIEGEESSGKSILSQRLSYCFLQNSYSLSYISTQSTTTEFVKQMTSLKYMINKKLLNGNLLYIPVYPLISDNTQKDDFIKKSMTTRAFYEKDIIIFDCLSTLISNDASEVQVGDLMSFLKRIASMNKIIVYTINPKELSDQVVTMLRTAATMVIKTETFSFGGNLKNSAKIVKYNMAAGPFQKVMVFRVDPGLGIAVEISSVA</sequence>
<accession>O06641</accession>